<keyword id="KW-0963">Cytoplasm</keyword>
<keyword id="KW-0342">GTP-binding</keyword>
<keyword id="KW-0547">Nucleotide-binding</keyword>
<keyword id="KW-0648">Protein biosynthesis</keyword>
<dbReference type="EMBL" id="CP000918">
    <property type="protein sequence ID" value="ACO17833.1"/>
    <property type="molecule type" value="Genomic_DNA"/>
</dbReference>
<dbReference type="RefSeq" id="WP_001025422.1">
    <property type="nucleotide sequence ID" value="NC_012468.1"/>
</dbReference>
<dbReference type="SMR" id="C1C5H4"/>
<dbReference type="KEGG" id="snm:SP70585_0508"/>
<dbReference type="HOGENOM" id="CLU_002794_2_1_9"/>
<dbReference type="Proteomes" id="UP000002211">
    <property type="component" value="Chromosome"/>
</dbReference>
<dbReference type="GO" id="GO:0005829">
    <property type="term" value="C:cytosol"/>
    <property type="evidence" value="ECO:0007669"/>
    <property type="project" value="TreeGrafter"/>
</dbReference>
<dbReference type="GO" id="GO:0005525">
    <property type="term" value="F:GTP binding"/>
    <property type="evidence" value="ECO:0007669"/>
    <property type="project" value="UniProtKB-UniRule"/>
</dbReference>
<dbReference type="GO" id="GO:0003924">
    <property type="term" value="F:GTPase activity"/>
    <property type="evidence" value="ECO:0007669"/>
    <property type="project" value="InterPro"/>
</dbReference>
<dbReference type="GO" id="GO:0016150">
    <property type="term" value="F:translation release factor activity, codon nonspecific"/>
    <property type="evidence" value="ECO:0007669"/>
    <property type="project" value="TreeGrafter"/>
</dbReference>
<dbReference type="GO" id="GO:0016149">
    <property type="term" value="F:translation release factor activity, codon specific"/>
    <property type="evidence" value="ECO:0007669"/>
    <property type="project" value="UniProtKB-UniRule"/>
</dbReference>
<dbReference type="GO" id="GO:0006449">
    <property type="term" value="P:regulation of translational termination"/>
    <property type="evidence" value="ECO:0007669"/>
    <property type="project" value="UniProtKB-UniRule"/>
</dbReference>
<dbReference type="CDD" id="cd04169">
    <property type="entry name" value="RF3"/>
    <property type="match status" value="1"/>
</dbReference>
<dbReference type="CDD" id="cd16259">
    <property type="entry name" value="RF3_III"/>
    <property type="match status" value="1"/>
</dbReference>
<dbReference type="FunFam" id="2.40.30.10:FF:000040">
    <property type="entry name" value="Peptide chain release factor 3"/>
    <property type="match status" value="1"/>
</dbReference>
<dbReference type="FunFam" id="3.30.70.3280:FF:000001">
    <property type="entry name" value="Peptide chain release factor 3"/>
    <property type="match status" value="1"/>
</dbReference>
<dbReference type="FunFam" id="3.40.50.300:FF:000542">
    <property type="entry name" value="Peptide chain release factor 3"/>
    <property type="match status" value="1"/>
</dbReference>
<dbReference type="Gene3D" id="3.40.50.300">
    <property type="entry name" value="P-loop containing nucleotide triphosphate hydrolases"/>
    <property type="match status" value="1"/>
</dbReference>
<dbReference type="Gene3D" id="3.30.70.3280">
    <property type="entry name" value="Peptide chain release factor 3, domain III"/>
    <property type="match status" value="1"/>
</dbReference>
<dbReference type="Gene3D" id="2.40.30.10">
    <property type="entry name" value="Translation factors"/>
    <property type="match status" value="1"/>
</dbReference>
<dbReference type="HAMAP" id="MF_00072">
    <property type="entry name" value="Rel_fac_3"/>
    <property type="match status" value="1"/>
</dbReference>
<dbReference type="InterPro" id="IPR053905">
    <property type="entry name" value="EF-G-like_DII"/>
</dbReference>
<dbReference type="InterPro" id="IPR035647">
    <property type="entry name" value="EFG_III/V"/>
</dbReference>
<dbReference type="InterPro" id="IPR031157">
    <property type="entry name" value="G_TR_CS"/>
</dbReference>
<dbReference type="InterPro" id="IPR027417">
    <property type="entry name" value="P-loop_NTPase"/>
</dbReference>
<dbReference type="InterPro" id="IPR004548">
    <property type="entry name" value="PrfC"/>
</dbReference>
<dbReference type="InterPro" id="IPR032090">
    <property type="entry name" value="RF3_C"/>
</dbReference>
<dbReference type="InterPro" id="IPR038467">
    <property type="entry name" value="RF3_dom_3_sf"/>
</dbReference>
<dbReference type="InterPro" id="IPR041732">
    <property type="entry name" value="RF3_GTP-bd"/>
</dbReference>
<dbReference type="InterPro" id="IPR005225">
    <property type="entry name" value="Small_GTP-bd"/>
</dbReference>
<dbReference type="InterPro" id="IPR000795">
    <property type="entry name" value="T_Tr_GTP-bd_dom"/>
</dbReference>
<dbReference type="InterPro" id="IPR009000">
    <property type="entry name" value="Transl_B-barrel_sf"/>
</dbReference>
<dbReference type="NCBIfam" id="TIGR00503">
    <property type="entry name" value="prfC"/>
    <property type="match status" value="1"/>
</dbReference>
<dbReference type="NCBIfam" id="NF001964">
    <property type="entry name" value="PRK00741.1"/>
    <property type="match status" value="1"/>
</dbReference>
<dbReference type="NCBIfam" id="TIGR00231">
    <property type="entry name" value="small_GTP"/>
    <property type="match status" value="1"/>
</dbReference>
<dbReference type="PANTHER" id="PTHR43556">
    <property type="entry name" value="PEPTIDE CHAIN RELEASE FACTOR RF3"/>
    <property type="match status" value="1"/>
</dbReference>
<dbReference type="PANTHER" id="PTHR43556:SF2">
    <property type="entry name" value="PEPTIDE CHAIN RELEASE FACTOR RF3"/>
    <property type="match status" value="1"/>
</dbReference>
<dbReference type="Pfam" id="PF22042">
    <property type="entry name" value="EF-G_D2"/>
    <property type="match status" value="1"/>
</dbReference>
<dbReference type="Pfam" id="PF00009">
    <property type="entry name" value="GTP_EFTU"/>
    <property type="match status" value="1"/>
</dbReference>
<dbReference type="Pfam" id="PF16658">
    <property type="entry name" value="RF3_C"/>
    <property type="match status" value="1"/>
</dbReference>
<dbReference type="PRINTS" id="PR00315">
    <property type="entry name" value="ELONGATNFCT"/>
</dbReference>
<dbReference type="PRINTS" id="PR01037">
    <property type="entry name" value="TCRTETOQM"/>
</dbReference>
<dbReference type="SUPFAM" id="SSF54980">
    <property type="entry name" value="EF-G C-terminal domain-like"/>
    <property type="match status" value="1"/>
</dbReference>
<dbReference type="SUPFAM" id="SSF52540">
    <property type="entry name" value="P-loop containing nucleoside triphosphate hydrolases"/>
    <property type="match status" value="1"/>
</dbReference>
<dbReference type="SUPFAM" id="SSF50447">
    <property type="entry name" value="Translation proteins"/>
    <property type="match status" value="1"/>
</dbReference>
<dbReference type="PROSITE" id="PS00301">
    <property type="entry name" value="G_TR_1"/>
    <property type="match status" value="1"/>
</dbReference>
<dbReference type="PROSITE" id="PS51722">
    <property type="entry name" value="G_TR_2"/>
    <property type="match status" value="1"/>
</dbReference>
<name>RF3_STRP7</name>
<accession>C1C5H4</accession>
<gene>
    <name evidence="1" type="primary">prfC</name>
    <name type="ordered locus">SP70585_0508</name>
</gene>
<feature type="chain" id="PRO_1000193536" description="Peptide chain release factor 3">
    <location>
        <begin position="1"/>
        <end position="514"/>
    </location>
</feature>
<feature type="domain" description="tr-type G">
    <location>
        <begin position="8"/>
        <end position="268"/>
    </location>
</feature>
<feature type="binding site" evidence="1">
    <location>
        <begin position="17"/>
        <end position="24"/>
    </location>
    <ligand>
        <name>GTP</name>
        <dbReference type="ChEBI" id="CHEBI:37565"/>
    </ligand>
</feature>
<feature type="binding site" evidence="1">
    <location>
        <begin position="85"/>
        <end position="89"/>
    </location>
    <ligand>
        <name>GTP</name>
        <dbReference type="ChEBI" id="CHEBI:37565"/>
    </ligand>
</feature>
<feature type="binding site" evidence="1">
    <location>
        <begin position="139"/>
        <end position="142"/>
    </location>
    <ligand>
        <name>GTP</name>
        <dbReference type="ChEBI" id="CHEBI:37565"/>
    </ligand>
</feature>
<evidence type="ECO:0000255" key="1">
    <source>
        <dbReference type="HAMAP-Rule" id="MF_00072"/>
    </source>
</evidence>
<organism>
    <name type="scientific">Streptococcus pneumoniae (strain 70585)</name>
    <dbReference type="NCBI Taxonomy" id="488221"/>
    <lineage>
        <taxon>Bacteria</taxon>
        <taxon>Bacillati</taxon>
        <taxon>Bacillota</taxon>
        <taxon>Bacilli</taxon>
        <taxon>Lactobacillales</taxon>
        <taxon>Streptococcaceae</taxon>
        <taxon>Streptococcus</taxon>
    </lineage>
</organism>
<protein>
    <recommendedName>
        <fullName evidence="1">Peptide chain release factor 3</fullName>
        <shortName evidence="1">RF-3</shortName>
    </recommendedName>
</protein>
<proteinExistence type="inferred from homology"/>
<comment type="function">
    <text evidence="1">Increases the formation of ribosomal termination complexes and stimulates activities of RF-1 and RF-2. It binds guanine nucleotides and has strong preference for UGA stop codons. It may interact directly with the ribosome. The stimulation of RF-1 and RF-2 is significantly reduced by GTP and GDP, but not by GMP.</text>
</comment>
<comment type="subcellular location">
    <subcellularLocation>
        <location evidence="1">Cytoplasm</location>
    </subcellularLocation>
</comment>
<comment type="similarity">
    <text evidence="1">Belongs to the TRAFAC class translation factor GTPase superfamily. Classic translation factor GTPase family. PrfC subfamily.</text>
</comment>
<sequence>MNIQEEIKKRRTFAIISHPDAGKTTITEQLLYFGGEIREAGTVKGKKTGTFAKSDWMDIEKQRGISVTSSVMQFDYDGKRVNILDTPGHEDFSEDTYRTLMAVDAAVMVVDSAKGIEAQTKKLFEVVKHRGIPVFTFMNKLDRDGREPLDLLQELEEILGIASYPMNWPIGMGKAFEGLYDLYNQRLELYKGDERFASLEDGDKLFGSNPFYEQVKDDIELLNEAGNEFSEEAILAGELTPVFFGSALTNFGVQTFLEIFLKFAPEPHGHKKTDGEIVDPYDKDFSGFVFKIQANMDPRHRDRIAFVRIVSGEFERGMSVNLPRTGKGAKLSNVTQFMAESRENVTNAVSGDIIGVYDTGTYQVGDTLTVGKNKFEFEPLPTFTPEIFMKVSAKNVMKQKSFHKGIEQLVQEGAVQLYKNYQTGEYMLGAVGQLQFEVFKHRMEGEYNAEVVMTPMGKKTVRWIKPEDLDERMSSSRNILAKDRFDQPVFLFENDFALRWFADKYPDVELEEKM</sequence>
<reference key="1">
    <citation type="journal article" date="2010" name="Genome Biol.">
        <title>Structure and dynamics of the pan-genome of Streptococcus pneumoniae and closely related species.</title>
        <authorList>
            <person name="Donati C."/>
            <person name="Hiller N.L."/>
            <person name="Tettelin H."/>
            <person name="Muzzi A."/>
            <person name="Croucher N.J."/>
            <person name="Angiuoli S.V."/>
            <person name="Oggioni M."/>
            <person name="Dunning Hotopp J.C."/>
            <person name="Hu F.Z."/>
            <person name="Riley D.R."/>
            <person name="Covacci A."/>
            <person name="Mitchell T.J."/>
            <person name="Bentley S.D."/>
            <person name="Kilian M."/>
            <person name="Ehrlich G.D."/>
            <person name="Rappuoli R."/>
            <person name="Moxon E.R."/>
            <person name="Masignani V."/>
        </authorList>
    </citation>
    <scope>NUCLEOTIDE SEQUENCE [LARGE SCALE GENOMIC DNA]</scope>
    <source>
        <strain>70585</strain>
    </source>
</reference>